<proteinExistence type="evidence at protein level"/>
<reference key="1">
    <citation type="journal article" date="2000" name="Exp. Cell Res.">
        <title>Crk-associated substrate p130(Cas) interacts with nephrocystin and both proteins localize to cell-cell contacts of polarized epithelial cells.</title>
        <authorList>
            <person name="Donaldson J.C."/>
            <person name="Dempsey P.J."/>
            <person name="Reddy S."/>
            <person name="Bouton A.H."/>
            <person name="Coffey R.J."/>
            <person name="Hanks S.K."/>
        </authorList>
    </citation>
    <scope>NUCLEOTIDE SEQUENCE [MRNA]</scope>
    <scope>TISSUE SPECIFICITY</scope>
    <source>
        <strain>Cocker spaniel</strain>
        <tissue>Kidney</tissue>
    </source>
</reference>
<reference key="2">
    <citation type="journal article" date="2006" name="J. Am. Soc. Nephrol.">
        <title>Nephrocystin specifically localizes to the transition zone of renal and respiratory cilia and photoreceptor connecting cilia.</title>
        <authorList>
            <person name="Fliegauf M."/>
            <person name="Horvath J."/>
            <person name="von Schnakenburg C."/>
            <person name="Olbrich H."/>
            <person name="Mueller D."/>
            <person name="Thumfart J."/>
            <person name="Schermer B."/>
            <person name="Pazour G.J."/>
            <person name="Neumann H.P."/>
            <person name="Zentgraf H."/>
            <person name="Benzing T."/>
            <person name="Omran H."/>
        </authorList>
    </citation>
    <scope>SUBCELLULAR LOCATION</scope>
    <scope>TISSUE SPECIFICITY</scope>
</reference>
<keyword id="KW-0965">Cell junction</keyword>
<keyword id="KW-0966">Cell projection</keyword>
<keyword id="KW-0969">Cilium</keyword>
<keyword id="KW-0970">Cilium biogenesis/degradation</keyword>
<keyword id="KW-0175">Coiled coil</keyword>
<keyword id="KW-0963">Cytoplasm</keyword>
<keyword id="KW-0206">Cytoskeleton</keyword>
<keyword id="KW-0221">Differentiation</keyword>
<keyword id="KW-0597">Phosphoprotein</keyword>
<keyword id="KW-1185">Reference proteome</keyword>
<keyword id="KW-0728">SH3 domain</keyword>
<keyword id="KW-0744">Spermatogenesis</keyword>
<keyword id="KW-0796">Tight junction</keyword>
<sequence length="565" mass="63961">GEEEDEEEEEEEESEEGGGEEEESEEEEEEKQENESHHQATSKEYIAVGDFTAQQAGDLTFKKREILLIIEKKPDGWWIAKNAKGNKGLIPRTYVEPYNKEEGQDTSEEEDSEEDVEVGDQTAGGEEVKQRTDSHWSAVQKAISEQINTVDVLTTMGAIPAGFRPSTLFQLLEEGNQFRASYFLQPELTPSQLAFRDLMWDAKTGTIRSRPSRVSFILTLWSCKMIPLPGTSIQVLSRHVRLCIFDGNKVLSNIHTVRATWQSKKPKTWTFSPQVTGILPCLLDGDCFIRSNSSSPDLGILFELGISYIRNSTGERGELSCGWVFLKLFDASGIPIPAKTYELFLNGGTPYEKGVEVDPSVSRRAYGSVFHQMMTMRRQPQLLVKLRSLNRRSRDLLSLLPETLIGSMCTIHLLIFYRQILGDVLLKDRTSMQSADLISNPVLATFPKLLEQPDMMDALRSSWAEKESTLKRSEKRDKEFLKAMFLLVYHDCVVPLLHSTLLPPFRWAEEETEAARWKVIADFLKQNQENGGALQALLSPDGVHEPFDISEQTYDLLGEIRKNVA</sequence>
<accession>Q9TU19</accession>
<name>NPHP1_CANLF</name>
<gene>
    <name type="primary">NPHP1</name>
    <name type="synonym">NPH1</name>
</gene>
<organism>
    <name type="scientific">Canis lupus familiaris</name>
    <name type="common">Dog</name>
    <name type="synonym">Canis familiaris</name>
    <dbReference type="NCBI Taxonomy" id="9615"/>
    <lineage>
        <taxon>Eukaryota</taxon>
        <taxon>Metazoa</taxon>
        <taxon>Chordata</taxon>
        <taxon>Craniata</taxon>
        <taxon>Vertebrata</taxon>
        <taxon>Euteleostomi</taxon>
        <taxon>Mammalia</taxon>
        <taxon>Eutheria</taxon>
        <taxon>Laurasiatheria</taxon>
        <taxon>Carnivora</taxon>
        <taxon>Caniformia</taxon>
        <taxon>Canidae</taxon>
        <taxon>Canis</taxon>
    </lineage>
</organism>
<feature type="chain" id="PRO_0000159584" description="Nephrocystin-1">
    <location>
        <begin position="1" status="less than"/>
        <end position="565"/>
    </location>
</feature>
<feature type="domain" description="SH3" evidence="5">
    <location>
        <begin position="40"/>
        <end position="100"/>
    </location>
</feature>
<feature type="region of interest" description="Disordered" evidence="6">
    <location>
        <begin position="1"/>
        <end position="46"/>
    </location>
</feature>
<feature type="region of interest" description="Disordered" evidence="6">
    <location>
        <begin position="95"/>
        <end position="132"/>
    </location>
</feature>
<feature type="coiled-coil region" evidence="4">
    <location>
        <begin position="2"/>
        <end position="48"/>
    </location>
</feature>
<feature type="compositionally biased region" description="Acidic residues" evidence="6">
    <location>
        <begin position="1"/>
        <end position="32"/>
    </location>
</feature>
<feature type="compositionally biased region" description="Acidic residues" evidence="6">
    <location>
        <begin position="104"/>
        <end position="118"/>
    </location>
</feature>
<feature type="modified residue" description="Phosphoserine" evidence="2">
    <location>
        <position position="14"/>
    </location>
</feature>
<feature type="modified residue" description="Phosphotyrosine; by FAK2" evidence="2">
    <location>
        <position position="182"/>
    </location>
</feature>
<feature type="modified residue" description="Phosphotyrosine; by SRC" evidence="2">
    <location>
        <position position="554"/>
    </location>
</feature>
<feature type="non-terminal residue">
    <location>
        <position position="1"/>
    </location>
</feature>
<dbReference type="EMBL" id="AF177536">
    <property type="protein sequence ID" value="AAD54337.1"/>
    <property type="molecule type" value="mRNA"/>
</dbReference>
<dbReference type="SMR" id="Q9TU19"/>
<dbReference type="FunCoup" id="Q9TU19">
    <property type="interactions" value="225"/>
</dbReference>
<dbReference type="IntAct" id="Q9TU19">
    <property type="interactions" value="1"/>
</dbReference>
<dbReference type="STRING" id="9615.ENSCAFP00000010483"/>
<dbReference type="PaxDb" id="9612-ENSCAFP00000010483"/>
<dbReference type="eggNOG" id="ENOG502QU7K">
    <property type="taxonomic scope" value="Eukaryota"/>
</dbReference>
<dbReference type="InParanoid" id="Q9TU19"/>
<dbReference type="OrthoDB" id="5340910at2759"/>
<dbReference type="Proteomes" id="UP000002254">
    <property type="component" value="Unplaced"/>
</dbReference>
<dbReference type="Proteomes" id="UP000694429">
    <property type="component" value="Unplaced"/>
</dbReference>
<dbReference type="Proteomes" id="UP000694542">
    <property type="component" value="Unplaced"/>
</dbReference>
<dbReference type="Proteomes" id="UP000805418">
    <property type="component" value="Unplaced"/>
</dbReference>
<dbReference type="GO" id="GO:0005912">
    <property type="term" value="C:adherens junction"/>
    <property type="evidence" value="ECO:0007669"/>
    <property type="project" value="UniProtKB-SubCell"/>
</dbReference>
<dbReference type="GO" id="GO:0005923">
    <property type="term" value="C:bicellular tight junction"/>
    <property type="evidence" value="ECO:0007669"/>
    <property type="project" value="UniProtKB-SubCell"/>
</dbReference>
<dbReference type="GO" id="GO:0005911">
    <property type="term" value="C:cell-cell junction"/>
    <property type="evidence" value="ECO:0000250"/>
    <property type="project" value="UniProtKB"/>
</dbReference>
<dbReference type="GO" id="GO:0005929">
    <property type="term" value="C:cilium"/>
    <property type="evidence" value="ECO:0000318"/>
    <property type="project" value="GO_Central"/>
</dbReference>
<dbReference type="GO" id="GO:0005737">
    <property type="term" value="C:cytoplasm"/>
    <property type="evidence" value="ECO:0000318"/>
    <property type="project" value="GO_Central"/>
</dbReference>
<dbReference type="GO" id="GO:0005856">
    <property type="term" value="C:cytoskeleton"/>
    <property type="evidence" value="ECO:0007669"/>
    <property type="project" value="UniProtKB-KW"/>
</dbReference>
<dbReference type="GO" id="GO:0030154">
    <property type="term" value="P:cell differentiation"/>
    <property type="evidence" value="ECO:0007669"/>
    <property type="project" value="UniProtKB-KW"/>
</dbReference>
<dbReference type="GO" id="GO:0030030">
    <property type="term" value="P:cell projection organization"/>
    <property type="evidence" value="ECO:0007669"/>
    <property type="project" value="UniProtKB-KW"/>
</dbReference>
<dbReference type="GO" id="GO:0090251">
    <property type="term" value="P:protein localization involved in establishment of planar polarity"/>
    <property type="evidence" value="ECO:0000318"/>
    <property type="project" value="GO_Central"/>
</dbReference>
<dbReference type="GO" id="GO:0007283">
    <property type="term" value="P:spermatogenesis"/>
    <property type="evidence" value="ECO:0007669"/>
    <property type="project" value="UniProtKB-KW"/>
</dbReference>
<dbReference type="CDD" id="cd11770">
    <property type="entry name" value="SH3_Nephrocystin"/>
    <property type="match status" value="1"/>
</dbReference>
<dbReference type="FunFam" id="2.30.30.40:FF:000171">
    <property type="entry name" value="Nephrocystin 1"/>
    <property type="match status" value="1"/>
</dbReference>
<dbReference type="Gene3D" id="2.30.30.40">
    <property type="entry name" value="SH3 Domains"/>
    <property type="match status" value="1"/>
</dbReference>
<dbReference type="InterPro" id="IPR039687">
    <property type="entry name" value="NPHP1"/>
</dbReference>
<dbReference type="InterPro" id="IPR030642">
    <property type="entry name" value="NPHP1_SH3"/>
</dbReference>
<dbReference type="InterPro" id="IPR036028">
    <property type="entry name" value="SH3-like_dom_sf"/>
</dbReference>
<dbReference type="InterPro" id="IPR001452">
    <property type="entry name" value="SH3_domain"/>
</dbReference>
<dbReference type="PANTHER" id="PTHR15176">
    <property type="entry name" value="NEPHROCYSTIN"/>
    <property type="match status" value="1"/>
</dbReference>
<dbReference type="PANTHER" id="PTHR15176:SF1">
    <property type="entry name" value="NEPHROCYSTIN-1"/>
    <property type="match status" value="1"/>
</dbReference>
<dbReference type="Pfam" id="PF00018">
    <property type="entry name" value="SH3_1"/>
    <property type="match status" value="1"/>
</dbReference>
<dbReference type="SMART" id="SM00326">
    <property type="entry name" value="SH3"/>
    <property type="match status" value="1"/>
</dbReference>
<dbReference type="SUPFAM" id="SSF50044">
    <property type="entry name" value="SH3-domain"/>
    <property type="match status" value="1"/>
</dbReference>
<dbReference type="PROSITE" id="PS50002">
    <property type="entry name" value="SH3"/>
    <property type="match status" value="1"/>
</dbReference>
<evidence type="ECO:0000250" key="1"/>
<evidence type="ECO:0000250" key="2">
    <source>
        <dbReference type="UniProtKB" id="O15259"/>
    </source>
</evidence>
<evidence type="ECO:0000250" key="3">
    <source>
        <dbReference type="UniProtKB" id="Q9QY53"/>
    </source>
</evidence>
<evidence type="ECO:0000255" key="4"/>
<evidence type="ECO:0000255" key="5">
    <source>
        <dbReference type="PROSITE-ProRule" id="PRU00192"/>
    </source>
</evidence>
<evidence type="ECO:0000256" key="6">
    <source>
        <dbReference type="SAM" id="MobiDB-lite"/>
    </source>
</evidence>
<evidence type="ECO:0000269" key="7">
    <source>
    </source>
</evidence>
<evidence type="ECO:0000269" key="8">
    <source>
    </source>
</evidence>
<evidence type="ECO:0000305" key="9"/>
<protein>
    <recommendedName>
        <fullName>Nephrocystin-1</fullName>
    </recommendedName>
</protein>
<comment type="function">
    <text evidence="3">Together with BCAR1 it may play a role in the control of epithelial cell polarity (By similarity). Involved in the organization of apical junctions in kidney cells together with NPHP4 and RPGRIP1L/NPHP8 (By similarity). Does not seem to be strictly required for ciliogenesis (By similarity). Seems to help to recruit PTK2B/PYK2 to cell matrix adhesions, thereby initiating phosphorylation of PTK2B/PYK2 and PTK2B/PYK2-dependent signaling (By similarity). May play a role in the regulation of intraflagellar transport (IFT) during cilia assembly (By similarity). Required for normal retina development (By similarity). In connecting photoreceptor cilia influences the movement of some IFT proteins such as IFT88 and WDR19. Involved in spermatogenesis (By similarity).</text>
</comment>
<comment type="subunit">
    <text evidence="2 3">Interacts with Crk-associated substrate BCAR1, NPHP4, PTK2B/PYK2 and tensin. Interacts with INVS and NPHP3. Interacts with AHI1 and TNK2 (By similarity). Interacts with NPHP4 in a complex containing NPHP1, NPHP4 and RPGRIP1L/NPHP8 (By similarity). Interacts with IQCB1; the interaction likely requires additional interactors (By similarity). Interacts with KIF7 (By similarity). Interacts with ANKS3 (By similarity). Interacts with SPATA7 (By similarity). Interacts with FLNA (By similarity).</text>
</comment>
<comment type="subcellular location">
    <subcellularLocation>
        <location evidence="3">Cell junction</location>
    </subcellularLocation>
    <subcellularLocation>
        <location evidence="3">Cell junction</location>
        <location evidence="3">Adherens junction</location>
    </subcellularLocation>
    <subcellularLocation>
        <location evidence="8">Cell projection</location>
        <location evidence="8">Cilium</location>
    </subcellularLocation>
    <subcellularLocation>
        <location evidence="2">Cytoplasm</location>
        <location evidence="2">Cytoskeleton</location>
        <location evidence="2">Cilium axoneme</location>
    </subcellularLocation>
    <subcellularLocation>
        <location evidence="3">Cell junction</location>
        <location evidence="3">Tight junction</location>
    </subcellularLocation>
    <text evidence="3">In the retinal photoreceptor cell layer, localizes at the connecting cilium (By similarity). Colocalizes with E-cadherin and BCAR1 at or near the cell-cell adherens junctions (By similarity). Localizes to respiratory cilia axoneme (By similarity). Localized to the transition zone of respiratory cilia (By similarity). Localized to the transition zone of photoreceptor-connecting cilia and renal monocilia (By similarity). In cultured renal cells, it localizes diffusely in the cytoplasm but, as cells approach confluence, it accumulates to basolateral tight junctions (By similarity).</text>
</comment>
<comment type="tissue specificity">
    <text evidence="7 8">Expressed in renal cells (at protein level).</text>
</comment>
<comment type="domain">
    <text evidence="1">The SH3 domain mediates the stable interaction with Cas.</text>
</comment>
<comment type="similarity">
    <text evidence="9">Belongs to the nephrocystin-1 family.</text>
</comment>